<proteinExistence type="inferred from homology"/>
<gene>
    <name type="primary">ftsW</name>
</gene>
<evidence type="ECO:0000250" key="1">
    <source>
        <dbReference type="UniProtKB" id="P39604"/>
    </source>
</evidence>
<evidence type="ECO:0000255" key="2"/>
<evidence type="ECO:0000305" key="3"/>
<comment type="function">
    <text>Could play a role in cyanelle division/peptidoglycan biosynthesis.</text>
</comment>
<comment type="catalytic activity">
    <reaction evidence="1">
        <text>[GlcNAc-(1-&gt;4)-Mur2Ac(oyl-L-Ala-gamma-D-Glu-L-Lys-D-Ala-D-Ala)](n)-di-trans,octa-cis-undecaprenyl diphosphate + beta-D-GlcNAc-(1-&gt;4)-Mur2Ac(oyl-L-Ala-gamma-D-Glu-L-Lys-D-Ala-D-Ala)-di-trans,octa-cis-undecaprenyl diphosphate = [GlcNAc-(1-&gt;4)-Mur2Ac(oyl-L-Ala-gamma-D-Glu-L-Lys-D-Ala-D-Ala)](n+1)-di-trans,octa-cis-undecaprenyl diphosphate + di-trans,octa-cis-undecaprenyl diphosphate + H(+)</text>
        <dbReference type="Rhea" id="RHEA:23708"/>
        <dbReference type="Rhea" id="RHEA-COMP:9602"/>
        <dbReference type="Rhea" id="RHEA-COMP:9603"/>
        <dbReference type="ChEBI" id="CHEBI:15378"/>
        <dbReference type="ChEBI" id="CHEBI:58405"/>
        <dbReference type="ChEBI" id="CHEBI:60033"/>
        <dbReference type="ChEBI" id="CHEBI:78435"/>
        <dbReference type="EC" id="2.4.99.28"/>
    </reaction>
</comment>
<comment type="subcellular location">
    <subcellularLocation>
        <location evidence="3">Plastid</location>
        <location evidence="3">Cyanelle membrane</location>
        <topology evidence="3">Multi-pass membrane protein</topology>
    </subcellularLocation>
</comment>
<comment type="similarity">
    <text evidence="3">Belongs to the SEDS family.</text>
</comment>
<reference key="1">
    <citation type="journal article" date="1995" name="Plant Mol. Biol. Rep.">
        <title>Nucleotide sequence of the cyanelle DNA from Cyanophora paradoxa.</title>
        <authorList>
            <person name="Stirewalt V.L."/>
            <person name="Michalowski C.B."/>
            <person name="Loeffelhardt W."/>
            <person name="Bohnert H.J."/>
            <person name="Bryant D.A."/>
        </authorList>
    </citation>
    <scope>NUCLEOTIDE SEQUENCE [LARGE SCALE GENOMIC DNA]</scope>
    <source>
        <strain>UTEX LB 555 / Pringsheim</strain>
    </source>
</reference>
<reference key="2">
    <citation type="book" date="1997" name="Eukaryotism and symbiosis">
        <title>The complete sequence of the cyanelle genome of Cyanophora paradoxa: the genetic complexity of a primitive plastid.</title>
        <editorList>
            <person name="Schenk H.E.A."/>
            <person name="Herrmann R."/>
            <person name="Jeon K.W."/>
            <person name="Mueller N.E."/>
            <person name="Schwemmler W."/>
        </editorList>
        <authorList>
            <person name="Loeffelhardt W."/>
            <person name="Stirewalt V.L."/>
            <person name="Michalowski C.B."/>
            <person name="Annarella M."/>
            <person name="Farley J.Y."/>
            <person name="Schluchter W.M."/>
            <person name="Chung S."/>
            <person name="Newmann-Spallart C."/>
            <person name="Steiner J.M."/>
            <person name="Jakowitsch J."/>
            <person name="Bohnert H.J."/>
            <person name="Bryant D.A."/>
        </authorList>
    </citation>
    <scope>NUCLEOTIDE SEQUENCE [LARGE SCALE GENOMIC DNA]</scope>
    <source>
        <strain>UTEX LB 555 / Pringsheim</strain>
    </source>
</reference>
<protein>
    <recommendedName>
        <fullName evidence="1">Putative peptidoglycan glycosyltransferase FtsW</fullName>
        <shortName evidence="1">PGT</shortName>
        <ecNumber evidence="1">2.4.99.28</ecNumber>
    </recommendedName>
    <alternativeName>
        <fullName evidence="1">Peptidoglycan polymerase</fullName>
        <shortName evidence="1">PG polymerase</shortName>
    </alternativeName>
</protein>
<sequence>MQLLYTILKEIADAILFFFIQVFKIFRYFFYPEFKNCSKLATLLRWLTHFWLFFGLMVLISASGFTSYEEHRDVLYYFKRQFVFCLIGIVISNILMHFPLTLLLKYSNIPFFFIFGLTILTLMPNIGISINGARRWIAVYGFLVQPSELIKPFWVLQISKIFGQWEFLTTRTKIFWLIIFLIQIVAVLIQPNLSTASLLGITLWLMGLCANFPWKYLLGTVFVGLSMAITSISLKPYQLSRITSFLDPWKDPRGKGYQLVQSLITIGSGGIFGTGYGISLQKTGYLPIHYTDFIFAVYIEEFGFIGAVSLLLLIIFYFLLVITVILKTNHPVLRLVGCGAIILLMIQTLLNMAVATGIFPTTGLPLPFFSYGGNALLANLINCSFLIRLALETKDRN</sequence>
<feature type="chain" id="PRO_0000062713" description="Putative peptidoglycan glycosyltransferase FtsW">
    <location>
        <begin position="1"/>
        <end position="397"/>
    </location>
</feature>
<feature type="transmembrane region" description="Helical" evidence="2">
    <location>
        <begin position="46"/>
        <end position="66"/>
    </location>
</feature>
<feature type="transmembrane region" description="Helical" evidence="2">
    <location>
        <begin position="82"/>
        <end position="102"/>
    </location>
</feature>
<feature type="transmembrane region" description="Helical" evidence="2">
    <location>
        <begin position="109"/>
        <end position="129"/>
    </location>
</feature>
<feature type="transmembrane region" description="Helical" evidence="2">
    <location>
        <begin position="174"/>
        <end position="194"/>
    </location>
</feature>
<feature type="transmembrane region" description="Helical" evidence="2">
    <location>
        <begin position="198"/>
        <end position="218"/>
    </location>
</feature>
<feature type="transmembrane region" description="Helical" evidence="2">
    <location>
        <begin position="302"/>
        <end position="322"/>
    </location>
</feature>
<feature type="transmembrane region" description="Helical" evidence="2">
    <location>
        <begin position="339"/>
        <end position="359"/>
    </location>
</feature>
<feature type="transmembrane region" description="Helical" evidence="2">
    <location>
        <begin position="367"/>
        <end position="387"/>
    </location>
</feature>
<dbReference type="EC" id="2.4.99.28" evidence="1"/>
<dbReference type="EMBL" id="U30821">
    <property type="protein sequence ID" value="AAA81300.1"/>
    <property type="molecule type" value="Genomic_DNA"/>
</dbReference>
<dbReference type="PIR" id="T06957">
    <property type="entry name" value="T06957"/>
</dbReference>
<dbReference type="RefSeq" id="NP_043269.1">
    <property type="nucleotide sequence ID" value="NC_001675.1"/>
</dbReference>
<dbReference type="SMR" id="P48280"/>
<dbReference type="GeneID" id="801587"/>
<dbReference type="GO" id="GO:0032153">
    <property type="term" value="C:cell division site"/>
    <property type="evidence" value="ECO:0007669"/>
    <property type="project" value="TreeGrafter"/>
</dbReference>
<dbReference type="GO" id="GO:0033113">
    <property type="term" value="C:cyanelle membrane"/>
    <property type="evidence" value="ECO:0007669"/>
    <property type="project" value="UniProtKB-SubCell"/>
</dbReference>
<dbReference type="GO" id="GO:0005886">
    <property type="term" value="C:plasma membrane"/>
    <property type="evidence" value="ECO:0007669"/>
    <property type="project" value="TreeGrafter"/>
</dbReference>
<dbReference type="GO" id="GO:0015648">
    <property type="term" value="F:lipid-linked peptidoglycan transporter activity"/>
    <property type="evidence" value="ECO:0007669"/>
    <property type="project" value="TreeGrafter"/>
</dbReference>
<dbReference type="GO" id="GO:0008955">
    <property type="term" value="F:peptidoglycan glycosyltransferase activity"/>
    <property type="evidence" value="ECO:0007669"/>
    <property type="project" value="RHEA"/>
</dbReference>
<dbReference type="GO" id="GO:0051301">
    <property type="term" value="P:cell division"/>
    <property type="evidence" value="ECO:0007669"/>
    <property type="project" value="InterPro"/>
</dbReference>
<dbReference type="GO" id="GO:0008360">
    <property type="term" value="P:regulation of cell shape"/>
    <property type="evidence" value="ECO:0007669"/>
    <property type="project" value="UniProtKB-KW"/>
</dbReference>
<dbReference type="InterPro" id="IPR018365">
    <property type="entry name" value="Cell_cycle_FtsW-rel_CS"/>
</dbReference>
<dbReference type="InterPro" id="IPR001182">
    <property type="entry name" value="FtsW/RodA"/>
</dbReference>
<dbReference type="PANTHER" id="PTHR30474">
    <property type="entry name" value="CELL CYCLE PROTEIN"/>
    <property type="match status" value="1"/>
</dbReference>
<dbReference type="PANTHER" id="PTHR30474:SF2">
    <property type="entry name" value="PEPTIDOGLYCAN GLYCOSYLTRANSFERASE FTSW-RELATED"/>
    <property type="match status" value="1"/>
</dbReference>
<dbReference type="Pfam" id="PF01098">
    <property type="entry name" value="FTSW_RODA_SPOVE"/>
    <property type="match status" value="1"/>
</dbReference>
<dbReference type="PROSITE" id="PS00428">
    <property type="entry name" value="FTSW_RODA_SPOVE"/>
    <property type="match status" value="1"/>
</dbReference>
<organism>
    <name type="scientific">Cyanophora paradoxa</name>
    <dbReference type="NCBI Taxonomy" id="2762"/>
    <lineage>
        <taxon>Eukaryota</taxon>
        <taxon>Glaucocystophyceae</taxon>
        <taxon>Cyanophoraceae</taxon>
        <taxon>Cyanophora</taxon>
    </lineage>
</organism>
<name>FTSW_CYAPA</name>
<geneLocation type="cyanelle"/>
<keyword id="KW-0133">Cell shape</keyword>
<keyword id="KW-0194">Cyanelle</keyword>
<keyword id="KW-0328">Glycosyltransferase</keyword>
<keyword id="KW-0472">Membrane</keyword>
<keyword id="KW-0573">Peptidoglycan synthesis</keyword>
<keyword id="KW-0934">Plastid</keyword>
<keyword id="KW-0808">Transferase</keyword>
<keyword id="KW-0812">Transmembrane</keyword>
<keyword id="KW-1133">Transmembrane helix</keyword>
<accession>P48280</accession>